<proteinExistence type="evidence at protein level"/>
<gene>
    <name evidence="6" type="primary">SLD</name>
</gene>
<organism>
    <name type="scientific">Lachancea kluyveri (strain ATCC 58438 / CBS 3082 / BCRC 21498 / NBRC 1685 / JCM 7257 / NCYC 543 / NRRL Y-12651)</name>
    <name type="common">Yeast</name>
    <name type="synonym">Saccharomyces kluyveri</name>
    <dbReference type="NCBI Taxonomy" id="226302"/>
    <lineage>
        <taxon>Eukaryota</taxon>
        <taxon>Fungi</taxon>
        <taxon>Dikarya</taxon>
        <taxon>Ascomycota</taxon>
        <taxon>Saccharomycotina</taxon>
        <taxon>Saccharomycetes</taxon>
        <taxon>Saccharomycetales</taxon>
        <taxon>Saccharomycetaceae</taxon>
        <taxon>Lachancea</taxon>
    </lineage>
</organism>
<name>SLD1_LACK1</name>
<sequence length="568" mass="66466">MDNIISRGEIEDRIARGQAIVIYEGLVLNLEKWIKFHPGGDKAIHHMIGRDATDEMKAYHCDETVEIFRKWRIGRIDQEWENFLPPIQGGVFRFLNQQHDSTDLGLSNKWIAPNTSDQFKFIKNEKHMCGEPDVKIYPKIPQGVIPSLNLKEAYEKKVVTDPATVADNYDNELVRQDLETLPDLDPKTQEWLSKEYNKMHNEIIEAGLYQCNYFRYVKELTRIGLLFALSYYLLYHRDQKFWSAFSMGCAWQQLVFIAHDAGHISITHHYQLDNIFGMIIASWVGGLSLGWWKRNHNVHHLITNDPIHDPDIQHLPFFAVSTRLFDNIYSTYYEKFLWFDAFAKKVVPWQNYLYYPMLAFGRFNLYRLSWMHVLLGLGPRRGKAGWFRYFELCGLIFFNYWFFYLLVGCKLQTGWDRFQYIMVSHITTMLVHVQITLSHFAMSTSDLGVGEGFPMRQLRTSMDVDCPRWLDFLHGGLQFQVVHHLFPRLPRHNLRAAQPYVIEFCEKVGIKYSIYGFSKGNGVVLTKLQEIAVQAKTMLECASAMKKEATGEREADEKTYRTKSIKNA</sequence>
<protein>
    <recommendedName>
        <fullName evidence="6">Delta 8-(E)-sphingolipid desaturase</fullName>
        <ecNumber evidence="5">1.14.19.18</ecNumber>
    </recommendedName>
</protein>
<keyword id="KW-0249">Electron transport</keyword>
<keyword id="KW-0349">Heme</keyword>
<keyword id="KW-0408">Iron</keyword>
<keyword id="KW-0443">Lipid metabolism</keyword>
<keyword id="KW-0472">Membrane</keyword>
<keyword id="KW-0479">Metal-binding</keyword>
<keyword id="KW-0560">Oxidoreductase</keyword>
<keyword id="KW-0746">Sphingolipid metabolism</keyword>
<keyword id="KW-0812">Transmembrane</keyword>
<keyword id="KW-1133">Transmembrane helix</keyword>
<keyword id="KW-0813">Transport</keyword>
<comment type="function">
    <text evidence="5">Delta(8)-fatty-acid desaturase which introduces a double bond at the 8-position in the long-chain base (LCB) of ceramides. Required for the formation of the di-unsaturated sphingoid base (E,E)-sphinga-4,8-dienine during glucosylceramide (GluCer) biosynthesis.</text>
</comment>
<comment type="catalytic activity">
    <reaction evidence="5">
        <text>an N-acylsphing-4-enine + 2 Fe(II)-[cytochrome b5] + O2 + 2 H(+) = a (4E,8E)-4-sphinga-4,8-dienine ceramide + 2 Fe(III)-[cytochrome b5] + 2 H2O</text>
        <dbReference type="Rhea" id="RHEA:46280"/>
        <dbReference type="Rhea" id="RHEA-COMP:10438"/>
        <dbReference type="Rhea" id="RHEA-COMP:10439"/>
        <dbReference type="ChEBI" id="CHEBI:15377"/>
        <dbReference type="ChEBI" id="CHEBI:15378"/>
        <dbReference type="ChEBI" id="CHEBI:15379"/>
        <dbReference type="ChEBI" id="CHEBI:29033"/>
        <dbReference type="ChEBI" id="CHEBI:29034"/>
        <dbReference type="ChEBI" id="CHEBI:52639"/>
        <dbReference type="ChEBI" id="CHEBI:85953"/>
        <dbReference type="EC" id="1.14.19.18"/>
    </reaction>
</comment>
<comment type="pathway">
    <text evidence="8">Lipid metabolism; sphingolipid metabolism.</text>
</comment>
<comment type="subcellular location">
    <subcellularLocation>
        <location evidence="2">Membrane</location>
        <topology evidence="2">Multi-pass membrane protein</topology>
    </subcellularLocation>
</comment>
<comment type="domain">
    <text evidence="1">The histidine box domains may contain the active site and/or be involved in metal ion binding.</text>
</comment>
<comment type="similarity">
    <text evidence="7">Belongs to the fatty acid desaturase type 1 family.</text>
</comment>
<evidence type="ECO:0000250" key="1"/>
<evidence type="ECO:0000255" key="2"/>
<evidence type="ECO:0000255" key="3">
    <source>
        <dbReference type="PROSITE-ProRule" id="PRU00279"/>
    </source>
</evidence>
<evidence type="ECO:0000256" key="4">
    <source>
        <dbReference type="SAM" id="MobiDB-lite"/>
    </source>
</evidence>
<evidence type="ECO:0000269" key="5">
    <source>
    </source>
</evidence>
<evidence type="ECO:0000303" key="6">
    <source>
    </source>
</evidence>
<evidence type="ECO:0000305" key="7"/>
<evidence type="ECO:0000305" key="8">
    <source>
    </source>
</evidence>
<feature type="chain" id="PRO_0000418891" description="Delta 8-(E)-sphingolipid desaturase">
    <location>
        <begin position="1"/>
        <end position="568"/>
    </location>
</feature>
<feature type="transmembrane region" description="Helical" evidence="2">
    <location>
        <begin position="241"/>
        <end position="261"/>
    </location>
</feature>
<feature type="transmembrane region" description="Helical" evidence="2">
    <location>
        <begin position="272"/>
        <end position="292"/>
    </location>
</feature>
<feature type="transmembrane region" description="Helical" evidence="2">
    <location>
        <begin position="352"/>
        <end position="377"/>
    </location>
</feature>
<feature type="transmembrane region" description="Helical" evidence="2">
    <location>
        <begin position="389"/>
        <end position="409"/>
    </location>
</feature>
<feature type="transmembrane region" description="Helical" evidence="2">
    <location>
        <begin position="421"/>
        <end position="441"/>
    </location>
</feature>
<feature type="domain" description="Cytochrome b5 heme-binding" evidence="3">
    <location>
        <begin position="2"/>
        <end position="77"/>
    </location>
</feature>
<feature type="region of interest" description="Disordered" evidence="4">
    <location>
        <begin position="549"/>
        <end position="568"/>
    </location>
</feature>
<feature type="short sequence motif" description="Histidine box-1" evidence="7">
    <location>
        <begin position="259"/>
        <end position="263"/>
    </location>
</feature>
<feature type="short sequence motif" description="Histidine box-2" evidence="7">
    <location>
        <begin position="296"/>
        <end position="300"/>
    </location>
</feature>
<feature type="short sequence motif" description="Histidine box-3" evidence="7">
    <location>
        <begin position="480"/>
        <end position="484"/>
    </location>
</feature>
<feature type="compositionally biased region" description="Basic and acidic residues" evidence="4">
    <location>
        <begin position="549"/>
        <end position="560"/>
    </location>
</feature>
<feature type="binding site" description="axial binding residue" evidence="3">
    <location>
        <position position="37"/>
    </location>
    <ligand>
        <name>heme</name>
        <dbReference type="ChEBI" id="CHEBI:30413"/>
    </ligand>
    <ligandPart>
        <name>Fe</name>
        <dbReference type="ChEBI" id="CHEBI:18248"/>
    </ligandPart>
</feature>
<feature type="binding site" description="axial binding residue" evidence="3">
    <location>
        <position position="60"/>
    </location>
    <ligand>
        <name>heme</name>
        <dbReference type="ChEBI" id="CHEBI:30413"/>
    </ligand>
    <ligandPart>
        <name>Fe</name>
        <dbReference type="ChEBI" id="CHEBI:18248"/>
    </ligandPart>
</feature>
<reference key="1">
    <citation type="journal article" date="2002" name="Curr. Microbiol.">
        <title>Isolation and characterization of the genes encoding delta(8)-sphingolipid desaturase from Saccharomyces kluyveri and Kluyveromyces lactis.</title>
        <authorList>
            <person name="Takakuwa N."/>
            <person name="Kinoshita M."/>
            <person name="Oda Y."/>
            <person name="Ohnishi M."/>
        </authorList>
    </citation>
    <scope>NUCLEOTIDE SEQUENCE [MRNA]</scope>
    <scope>CATALYTIC ACTIVITY</scope>
    <scope>FUNCTION</scope>
    <scope>PATHWAY</scope>
    <source>
        <strain>ATCC 58438 / CBS 3082 / BCRC 21498 / NBRC 1685 / JCM 7257 / NCYC 543 / NRRL Y-12651</strain>
    </source>
</reference>
<dbReference type="EC" id="1.14.19.18" evidence="5"/>
<dbReference type="EMBL" id="AB085689">
    <property type="protein sequence ID" value="BAB93117.1"/>
    <property type="molecule type" value="Genomic_DNA"/>
</dbReference>
<dbReference type="SMR" id="Q8NKG9"/>
<dbReference type="KEGG" id="ag:BAB93117"/>
<dbReference type="BRENDA" id="1.14.19.18">
    <property type="organism ID" value="6897"/>
</dbReference>
<dbReference type="BRENDA" id="1.14.19.4">
    <property type="organism ID" value="6897"/>
</dbReference>
<dbReference type="UniPathway" id="UPA00222"/>
<dbReference type="GO" id="GO:0016020">
    <property type="term" value="C:membrane"/>
    <property type="evidence" value="ECO:0007669"/>
    <property type="project" value="UniProtKB-SubCell"/>
</dbReference>
<dbReference type="GO" id="GO:0046872">
    <property type="term" value="F:metal ion binding"/>
    <property type="evidence" value="ECO:0007669"/>
    <property type="project" value="UniProtKB-KW"/>
</dbReference>
<dbReference type="GO" id="GO:0016717">
    <property type="term" value="F:oxidoreductase activity, acting on paired donors, with oxidation of a pair of donors resulting in the reduction of molecular oxygen to two molecules of water"/>
    <property type="evidence" value="ECO:0007669"/>
    <property type="project" value="TreeGrafter"/>
</dbReference>
<dbReference type="GO" id="GO:0006665">
    <property type="term" value="P:sphingolipid metabolic process"/>
    <property type="evidence" value="ECO:0007669"/>
    <property type="project" value="UniProtKB-UniPathway"/>
</dbReference>
<dbReference type="CDD" id="cd03506">
    <property type="entry name" value="Delta6-FADS-like"/>
    <property type="match status" value="1"/>
</dbReference>
<dbReference type="Gene3D" id="3.10.120.10">
    <property type="entry name" value="Cytochrome b5-like heme/steroid binding domain"/>
    <property type="match status" value="1"/>
</dbReference>
<dbReference type="InterPro" id="IPR001199">
    <property type="entry name" value="Cyt_B5-like_heme/steroid-bd"/>
</dbReference>
<dbReference type="InterPro" id="IPR036400">
    <property type="entry name" value="Cyt_B5-like_heme/steroid_sf"/>
</dbReference>
<dbReference type="InterPro" id="IPR005804">
    <property type="entry name" value="FA_desaturase_dom"/>
</dbReference>
<dbReference type="InterPro" id="IPR012171">
    <property type="entry name" value="Fatty_acid_desaturase"/>
</dbReference>
<dbReference type="PANTHER" id="PTHR19353:SF30">
    <property type="entry name" value="DELTA 8-(E)-SPHINGOLIPID DESATURASE"/>
    <property type="match status" value="1"/>
</dbReference>
<dbReference type="PANTHER" id="PTHR19353">
    <property type="entry name" value="FATTY ACID DESATURASE 2"/>
    <property type="match status" value="1"/>
</dbReference>
<dbReference type="Pfam" id="PF00173">
    <property type="entry name" value="Cyt-b5"/>
    <property type="match status" value="1"/>
</dbReference>
<dbReference type="Pfam" id="PF00487">
    <property type="entry name" value="FA_desaturase"/>
    <property type="match status" value="1"/>
</dbReference>
<dbReference type="PIRSF" id="PIRSF015921">
    <property type="entry name" value="FA_sphinglp_des"/>
    <property type="match status" value="1"/>
</dbReference>
<dbReference type="SMART" id="SM01117">
    <property type="entry name" value="Cyt-b5"/>
    <property type="match status" value="1"/>
</dbReference>
<dbReference type="SUPFAM" id="SSF55856">
    <property type="entry name" value="Cytochrome b5-like heme/steroid binding domain"/>
    <property type="match status" value="1"/>
</dbReference>
<dbReference type="PROSITE" id="PS50255">
    <property type="entry name" value="CYTOCHROME_B5_2"/>
    <property type="match status" value="1"/>
</dbReference>
<accession>Q8NKG9</accession>